<reference key="1">
    <citation type="journal article" date="1995" name="Mol. Biochem. Parasitol.">
        <title>Three genes and two isozymes: gene conversion and the compartmentalization and expression of the phosphoglycerate kinases of Trypanosoma (Nannomonas) congolense.</title>
        <authorList>
            <person name="Parker H.L."/>
            <person name="Hill T."/>
            <person name="Alexander K.A."/>
            <person name="Murphy N.B."/>
            <person name="Fish W.R."/>
            <person name="Parsons M."/>
        </authorList>
    </citation>
    <scope>NUCLEOTIDE SEQUENCE [GENOMIC DNA]</scope>
    <source>
        <strain>IL3000</strain>
    </source>
</reference>
<feature type="chain" id="PRO_0000145868" description="Phosphoglycerate kinase, glycosomal">
    <location>
        <begin position="1"/>
        <end position="509"/>
    </location>
</feature>
<feature type="binding site" evidence="1">
    <location>
        <position position="32"/>
    </location>
    <ligand>
        <name>(2R)-3-phosphoglycerate</name>
        <dbReference type="ChEBI" id="CHEBI:58272"/>
    </ligand>
</feature>
<feature type="binding site" evidence="3">
    <location>
        <position position="33"/>
    </location>
    <ligand>
        <name>(2R)-3-phosphoglycerate</name>
        <dbReference type="ChEBI" id="CHEBI:58272"/>
    </ligand>
</feature>
<feature type="binding site" evidence="1">
    <location>
        <position position="34"/>
    </location>
    <ligand>
        <name>(2R)-3-phosphoglycerate</name>
        <dbReference type="ChEBI" id="CHEBI:58272"/>
    </ligand>
</feature>
<feature type="binding site" evidence="3">
    <location>
        <position position="35"/>
    </location>
    <ligand>
        <name>(2R)-3-phosphoglycerate</name>
        <dbReference type="ChEBI" id="CHEBI:58272"/>
    </ligand>
</feature>
<feature type="binding site" evidence="3">
    <location>
        <position position="48"/>
    </location>
    <ligand>
        <name>(2R)-3-phosphoglycerate</name>
        <dbReference type="ChEBI" id="CHEBI:58272"/>
    </ligand>
</feature>
<feature type="binding site" evidence="1">
    <location>
        <position position="70"/>
    </location>
    <ligand>
        <name>(2R)-3-phosphoglycerate</name>
        <dbReference type="ChEBI" id="CHEBI:58272"/>
    </ligand>
</feature>
<feature type="binding site" evidence="3">
    <location>
        <position position="71"/>
    </location>
    <ligand>
        <name>(2R)-3-phosphoglycerate</name>
        <dbReference type="ChEBI" id="CHEBI:58272"/>
    </ligand>
</feature>
<feature type="binding site" evidence="1">
    <location>
        <position position="73"/>
    </location>
    <ligand>
        <name>(2R)-3-phosphoglycerate</name>
        <dbReference type="ChEBI" id="CHEBI:58272"/>
    </ligand>
</feature>
<feature type="binding site" evidence="3">
    <location>
        <position position="74"/>
    </location>
    <ligand>
        <name>(2R)-3-phosphoglycerate</name>
        <dbReference type="ChEBI" id="CHEBI:58272"/>
    </ligand>
</feature>
<feature type="binding site" evidence="3">
    <location>
        <position position="224"/>
    </location>
    <ligand>
        <name>(2R)-3-phosphoglycerate</name>
        <dbReference type="ChEBI" id="CHEBI:58272"/>
    </ligand>
</feature>
<feature type="binding site" evidence="1">
    <location>
        <position position="260"/>
    </location>
    <ligand>
        <name>(2R)-3-phosphoglycerate</name>
        <dbReference type="ChEBI" id="CHEBI:58272"/>
    </ligand>
</feature>
<feature type="binding site" evidence="3">
    <location>
        <position position="261"/>
    </location>
    <ligand>
        <name>(2R)-3-phosphoglycerate</name>
        <dbReference type="ChEBI" id="CHEBI:58272"/>
    </ligand>
</feature>
<feature type="binding site" evidence="1">
    <location>
        <position position="306"/>
    </location>
    <ligand>
        <name>ADP</name>
        <dbReference type="ChEBI" id="CHEBI:456216"/>
    </ligand>
</feature>
<feature type="binding site" evidence="1">
    <location>
        <position position="306"/>
    </location>
    <ligand>
        <name>CDP</name>
        <dbReference type="ChEBI" id="CHEBI:58069"/>
    </ligand>
</feature>
<feature type="binding site" evidence="2">
    <location>
        <position position="308"/>
    </location>
    <ligand>
        <name>(2R)-3-phosphoglycerate</name>
        <dbReference type="ChEBI" id="CHEBI:58272"/>
    </ligand>
</feature>
<feature type="binding site" evidence="3">
    <location>
        <position position="308"/>
    </location>
    <ligand>
        <name>AMP</name>
        <dbReference type="ChEBI" id="CHEBI:456215"/>
    </ligand>
</feature>
<feature type="binding site" evidence="1">
    <location>
        <position position="311"/>
    </location>
    <ligand>
        <name>CDP</name>
        <dbReference type="ChEBI" id="CHEBI:58069"/>
    </ligand>
</feature>
<feature type="binding site" evidence="1">
    <location>
        <position position="311"/>
    </location>
    <ligand>
        <name>Mg(2+)</name>
        <dbReference type="ChEBI" id="CHEBI:18420"/>
    </ligand>
</feature>
<feature type="binding site" evidence="2">
    <location>
        <position position="312"/>
    </location>
    <ligand>
        <name>ADP</name>
        <dbReference type="ChEBI" id="CHEBI:456216"/>
    </ligand>
</feature>
<feature type="binding site" evidence="3">
    <location>
        <position position="312"/>
    </location>
    <ligand>
        <name>AMP</name>
        <dbReference type="ChEBI" id="CHEBI:456215"/>
    </ligand>
</feature>
<feature type="binding site" evidence="3">
    <location>
        <position position="312"/>
    </location>
    <ligand>
        <name>ATP</name>
        <dbReference type="ChEBI" id="CHEBI:30616"/>
    </ligand>
</feature>
<feature type="binding site" evidence="1">
    <location>
        <position position="330"/>
    </location>
    <ligand>
        <name>ADP</name>
        <dbReference type="ChEBI" id="CHEBI:456216"/>
    </ligand>
</feature>
<feature type="binding site" evidence="1">
    <location>
        <position position="330"/>
    </location>
    <ligand>
        <name>CDP</name>
        <dbReference type="ChEBI" id="CHEBI:58069"/>
    </ligand>
</feature>
<feature type="binding site" evidence="3">
    <location>
        <position position="331"/>
    </location>
    <ligand>
        <name>AMP</name>
        <dbReference type="ChEBI" id="CHEBI:456215"/>
    </ligand>
</feature>
<feature type="binding site" evidence="3">
    <location>
        <position position="331"/>
    </location>
    <ligand>
        <name>ATP</name>
        <dbReference type="ChEBI" id="CHEBI:30616"/>
    </ligand>
</feature>
<feature type="binding site" evidence="2">
    <location>
        <position position="403"/>
    </location>
    <ligand>
        <name>ADP</name>
        <dbReference type="ChEBI" id="CHEBI:456216"/>
    </ligand>
</feature>
<feature type="binding site" evidence="3">
    <location>
        <position position="403"/>
    </location>
    <ligand>
        <name>AMP</name>
        <dbReference type="ChEBI" id="CHEBI:456215"/>
    </ligand>
</feature>
<feature type="binding site" evidence="3">
    <location>
        <position position="403"/>
    </location>
    <ligand>
        <name>ATP</name>
        <dbReference type="ChEBI" id="CHEBI:30616"/>
    </ligand>
</feature>
<feature type="binding site" evidence="2">
    <location>
        <position position="427"/>
    </location>
    <ligand>
        <name>ADP</name>
        <dbReference type="ChEBI" id="CHEBI:456216"/>
    </ligand>
</feature>
<feature type="binding site" evidence="1">
    <location>
        <position position="428"/>
    </location>
    <ligand>
        <name>CDP</name>
        <dbReference type="ChEBI" id="CHEBI:58069"/>
    </ligand>
</feature>
<feature type="binding site" evidence="1">
    <location>
        <position position="433"/>
    </location>
    <ligand>
        <name>ADP</name>
        <dbReference type="ChEBI" id="CHEBI:456216"/>
    </ligand>
</feature>
<feature type="binding site" evidence="1">
    <location>
        <position position="433"/>
    </location>
    <ligand>
        <name>CDP</name>
        <dbReference type="ChEBI" id="CHEBI:58069"/>
    </ligand>
</feature>
<feature type="binding site" evidence="2">
    <location>
        <position position="434"/>
    </location>
    <ligand>
        <name>ADP</name>
        <dbReference type="ChEBI" id="CHEBI:456216"/>
    </ligand>
</feature>
<feature type="binding site" evidence="3">
    <location>
        <position position="434"/>
    </location>
    <ligand>
        <name>AMP</name>
        <dbReference type="ChEBI" id="CHEBI:456215"/>
    </ligand>
</feature>
<feature type="binding site" evidence="3">
    <location>
        <position position="434"/>
    </location>
    <ligand>
        <name>ATP</name>
        <dbReference type="ChEBI" id="CHEBI:30616"/>
    </ligand>
</feature>
<feature type="binding site" evidence="2">
    <location>
        <position position="466"/>
    </location>
    <ligand>
        <name>ADP</name>
        <dbReference type="ChEBI" id="CHEBI:456216"/>
    </ligand>
</feature>
<feature type="binding site" evidence="3">
    <location>
        <position position="466"/>
    </location>
    <ligand>
        <name>ATP</name>
        <dbReference type="ChEBI" id="CHEBI:30616"/>
    </ligand>
</feature>
<feature type="binding site" evidence="3">
    <location>
        <position position="466"/>
    </location>
    <ligand>
        <name>Mg(2+)</name>
        <dbReference type="ChEBI" id="CHEBI:18420"/>
    </ligand>
</feature>
<feature type="binding site" evidence="2">
    <location>
        <position position="467"/>
    </location>
    <ligand>
        <name>ADP</name>
        <dbReference type="ChEBI" id="CHEBI:456216"/>
    </ligand>
</feature>
<feature type="binding site" evidence="3">
    <location>
        <position position="467"/>
    </location>
    <ligand>
        <name>ATP</name>
        <dbReference type="ChEBI" id="CHEBI:30616"/>
    </ligand>
</feature>
<organism>
    <name type="scientific">Trypanosoma congolense</name>
    <dbReference type="NCBI Taxonomy" id="5692"/>
    <lineage>
        <taxon>Eukaryota</taxon>
        <taxon>Discoba</taxon>
        <taxon>Euglenozoa</taxon>
        <taxon>Kinetoplastea</taxon>
        <taxon>Metakinetoplastina</taxon>
        <taxon>Trypanosomatida</taxon>
        <taxon>Trypanosomatidae</taxon>
        <taxon>Trypanosoma</taxon>
        <taxon>Nannomonas</taxon>
    </lineage>
</organism>
<evidence type="ECO:0000250" key="1">
    <source>
        <dbReference type="UniProtKB" id="P00558"/>
    </source>
</evidence>
<evidence type="ECO:0000250" key="2">
    <source>
        <dbReference type="UniProtKB" id="P07378"/>
    </source>
</evidence>
<evidence type="ECO:0000250" key="3">
    <source>
        <dbReference type="UniProtKB" id="Q7SIB7"/>
    </source>
</evidence>
<evidence type="ECO:0000305" key="4"/>
<gene>
    <name type="primary">56PGK</name>
</gene>
<proteinExistence type="inferred from homology"/>
<name>PGKG_TRYCO</name>
<dbReference type="EC" id="2.7.2.3" evidence="1"/>
<dbReference type="EMBL" id="L37337">
    <property type="protein sequence ID" value="AAC37221.1"/>
    <property type="molecule type" value="Genomic_DNA"/>
</dbReference>
<dbReference type="SMR" id="P41762"/>
<dbReference type="VEuPathDB" id="TriTrypDB:TcIL3000.A.H_000275400"/>
<dbReference type="VEuPathDB" id="TriTrypDB:TcIL3000_1_240"/>
<dbReference type="UniPathway" id="UPA00109">
    <property type="reaction ID" value="UER00185"/>
</dbReference>
<dbReference type="GO" id="GO:0005829">
    <property type="term" value="C:cytosol"/>
    <property type="evidence" value="ECO:0007669"/>
    <property type="project" value="TreeGrafter"/>
</dbReference>
<dbReference type="GO" id="GO:0020015">
    <property type="term" value="C:glycosome"/>
    <property type="evidence" value="ECO:0007669"/>
    <property type="project" value="UniProtKB-SubCell"/>
</dbReference>
<dbReference type="GO" id="GO:0043531">
    <property type="term" value="F:ADP binding"/>
    <property type="evidence" value="ECO:0007669"/>
    <property type="project" value="TreeGrafter"/>
</dbReference>
<dbReference type="GO" id="GO:0005524">
    <property type="term" value="F:ATP binding"/>
    <property type="evidence" value="ECO:0007669"/>
    <property type="project" value="UniProtKB-KW"/>
</dbReference>
<dbReference type="GO" id="GO:0046872">
    <property type="term" value="F:metal ion binding"/>
    <property type="evidence" value="ECO:0007669"/>
    <property type="project" value="UniProtKB-KW"/>
</dbReference>
<dbReference type="GO" id="GO:0004618">
    <property type="term" value="F:phosphoglycerate kinase activity"/>
    <property type="evidence" value="ECO:0007669"/>
    <property type="project" value="UniProtKB-EC"/>
</dbReference>
<dbReference type="GO" id="GO:0006094">
    <property type="term" value="P:gluconeogenesis"/>
    <property type="evidence" value="ECO:0007669"/>
    <property type="project" value="TreeGrafter"/>
</dbReference>
<dbReference type="GO" id="GO:0006096">
    <property type="term" value="P:glycolytic process"/>
    <property type="evidence" value="ECO:0007669"/>
    <property type="project" value="UniProtKB-UniPathway"/>
</dbReference>
<dbReference type="CDD" id="cd00318">
    <property type="entry name" value="Phosphoglycerate_kinase"/>
    <property type="match status" value="1"/>
</dbReference>
<dbReference type="FunFam" id="3.40.50.1260:FF:000007">
    <property type="entry name" value="Phosphoglycerate kinase"/>
    <property type="match status" value="1"/>
</dbReference>
<dbReference type="FunFam" id="3.40.50.1260:FF:000027">
    <property type="entry name" value="Phosphoglycerate kinase A"/>
    <property type="match status" value="1"/>
</dbReference>
<dbReference type="Gene3D" id="3.40.50.1260">
    <property type="entry name" value="Phosphoglycerate kinase, N-terminal domain"/>
    <property type="match status" value="3"/>
</dbReference>
<dbReference type="HAMAP" id="MF_00145">
    <property type="entry name" value="Phosphoglyc_kinase"/>
    <property type="match status" value="1"/>
</dbReference>
<dbReference type="InterPro" id="IPR027250">
    <property type="entry name" value="Pgk_euglenozoa"/>
</dbReference>
<dbReference type="InterPro" id="IPR001576">
    <property type="entry name" value="Phosphoglycerate_kinase"/>
</dbReference>
<dbReference type="InterPro" id="IPR015911">
    <property type="entry name" value="Phosphoglycerate_kinase_CS"/>
</dbReference>
<dbReference type="InterPro" id="IPR015824">
    <property type="entry name" value="Phosphoglycerate_kinase_N"/>
</dbReference>
<dbReference type="InterPro" id="IPR036043">
    <property type="entry name" value="Phosphoglycerate_kinase_sf"/>
</dbReference>
<dbReference type="PANTHER" id="PTHR11406">
    <property type="entry name" value="PHOSPHOGLYCERATE KINASE"/>
    <property type="match status" value="1"/>
</dbReference>
<dbReference type="PANTHER" id="PTHR11406:SF23">
    <property type="entry name" value="PHOSPHOGLYCERATE KINASE 1, CHLOROPLASTIC-RELATED"/>
    <property type="match status" value="1"/>
</dbReference>
<dbReference type="Pfam" id="PF00162">
    <property type="entry name" value="PGK"/>
    <property type="match status" value="1"/>
</dbReference>
<dbReference type="PIRSF" id="PIRSF000724">
    <property type="entry name" value="Pgk"/>
    <property type="match status" value="1"/>
</dbReference>
<dbReference type="PIRSF" id="PIRSF500126">
    <property type="entry name" value="Pgk_euglenozoa"/>
    <property type="match status" value="1"/>
</dbReference>
<dbReference type="PRINTS" id="PR00477">
    <property type="entry name" value="PHGLYCKINASE"/>
</dbReference>
<dbReference type="SUPFAM" id="SSF53748">
    <property type="entry name" value="Phosphoglycerate kinase"/>
    <property type="match status" value="1"/>
</dbReference>
<dbReference type="PROSITE" id="PS00111">
    <property type="entry name" value="PGLYCERATE_KINASE"/>
    <property type="match status" value="1"/>
</dbReference>
<keyword id="KW-0067">ATP-binding</keyword>
<keyword id="KW-0324">Glycolysis</keyword>
<keyword id="KW-0327">Glycosome</keyword>
<keyword id="KW-0418">Kinase</keyword>
<keyword id="KW-0460">Magnesium</keyword>
<keyword id="KW-0479">Metal-binding</keyword>
<keyword id="KW-0547">Nucleotide-binding</keyword>
<keyword id="KW-0576">Peroxisome</keyword>
<keyword id="KW-0808">Transferase</keyword>
<protein>
    <recommendedName>
        <fullName>Phosphoglycerate kinase, glycosomal</fullName>
        <ecNumber evidence="1">2.7.2.3</ecNumber>
    </recommendedName>
</protein>
<comment type="catalytic activity">
    <reaction evidence="1">
        <text>(2R)-3-phosphoglycerate + ATP = (2R)-3-phospho-glyceroyl phosphate + ADP</text>
        <dbReference type="Rhea" id="RHEA:14801"/>
        <dbReference type="ChEBI" id="CHEBI:30616"/>
        <dbReference type="ChEBI" id="CHEBI:57604"/>
        <dbReference type="ChEBI" id="CHEBI:58272"/>
        <dbReference type="ChEBI" id="CHEBI:456216"/>
        <dbReference type="EC" id="2.7.2.3"/>
    </reaction>
</comment>
<comment type="cofactor">
    <cofactor evidence="2">
        <name>Mg(2+)</name>
        <dbReference type="ChEBI" id="CHEBI:18420"/>
    </cofactor>
</comment>
<comment type="pathway">
    <text>Carbohydrate degradation; glycolysis; pyruvate from D-glyceraldehyde 3-phosphate: step 2/5.</text>
</comment>
<comment type="subunit">
    <text>Monomer.</text>
</comment>
<comment type="subcellular location">
    <subcellularLocation>
        <location>Glycosome</location>
    </subcellularLocation>
</comment>
<comment type="similarity">
    <text evidence="4">Belongs to the phosphoglycerate kinase family.</text>
</comment>
<accession>P41762</accession>
<sequence length="509" mass="55963">MSHVTGVTSNIRIKKTIDDIWPLTAKRVLVRVDFNVPIQNGHITNDYRIRATIPTIQRIIDQGGICILLSHLGRPAGISMTTAVRDVRRRYHEAHFHDNKGKTAFFSVLPPEEKIKILAQSSLREEATHIMPGVKSGKTILFARLPEDEKKQLLMQYLDEKKDNGLPQLSVSAGYEEQYSLRPVAVRLAELLGQHVYFAHDCMDAKMELSRLKRGNVMLLENVRFYREEDSKKEEEREAMAKVLASYGDIFVSDAFGTAHRDSATMTGIPKVLGHGAAGYLMEKEISYFSKVLGNPPRPLVAIVGGSKVSDKIQLLDNMLQRIDYLLIGGAMAYTFLKAQGHRIGTSMCEEDRLDLARSLLKKAEDRKVQVLLPVDHVCHTEFKAVDTPVVTADADIPDGHMALDIGPKTIANYVETIGKCKSAIWNGPMGVFEMTPYSKGTFAVAKAMGDCTQKNGLMSIIGGGDSASAAEQSGEATRMSHVSTGGGASLELLEGKTLPGVAILDDKE</sequence>